<reference key="1">
    <citation type="journal article" date="2003" name="Proc. Natl. Acad. Sci. U.S.A.">
        <title>The genome sequence of Blochmannia floridanus: comparative analysis of reduced genomes.</title>
        <authorList>
            <person name="Gil R."/>
            <person name="Silva F.J."/>
            <person name="Zientz E."/>
            <person name="Delmotte F."/>
            <person name="Gonzalez-Candelas F."/>
            <person name="Latorre A."/>
            <person name="Rausell C."/>
            <person name="Kamerbeek J."/>
            <person name="Gadau J."/>
            <person name="Hoelldobler B."/>
            <person name="van Ham R.C.H.J."/>
            <person name="Gross R."/>
            <person name="Moya A."/>
        </authorList>
    </citation>
    <scope>NUCLEOTIDE SEQUENCE [LARGE SCALE GENOMIC DNA]</scope>
</reference>
<evidence type="ECO:0000255" key="1">
    <source>
        <dbReference type="HAMAP-Rule" id="MF_00444"/>
    </source>
</evidence>
<dbReference type="EC" id="3.4.21.92" evidence="1"/>
<dbReference type="EMBL" id="BX248583">
    <property type="protein sequence ID" value="CAD83317.1"/>
    <property type="molecule type" value="Genomic_DNA"/>
</dbReference>
<dbReference type="SMR" id="Q7VRH1"/>
<dbReference type="STRING" id="203907.Bfl246"/>
<dbReference type="MEROPS" id="S14.001"/>
<dbReference type="KEGG" id="bfl:Bfl246"/>
<dbReference type="eggNOG" id="COG0740">
    <property type="taxonomic scope" value="Bacteria"/>
</dbReference>
<dbReference type="HOGENOM" id="CLU_058707_3_2_6"/>
<dbReference type="OrthoDB" id="9802800at2"/>
<dbReference type="Proteomes" id="UP000002192">
    <property type="component" value="Chromosome"/>
</dbReference>
<dbReference type="GO" id="GO:0005737">
    <property type="term" value="C:cytoplasm"/>
    <property type="evidence" value="ECO:0007669"/>
    <property type="project" value="UniProtKB-SubCell"/>
</dbReference>
<dbReference type="GO" id="GO:0009368">
    <property type="term" value="C:endopeptidase Clp complex"/>
    <property type="evidence" value="ECO:0007669"/>
    <property type="project" value="TreeGrafter"/>
</dbReference>
<dbReference type="GO" id="GO:0004176">
    <property type="term" value="F:ATP-dependent peptidase activity"/>
    <property type="evidence" value="ECO:0007669"/>
    <property type="project" value="InterPro"/>
</dbReference>
<dbReference type="GO" id="GO:0051117">
    <property type="term" value="F:ATPase binding"/>
    <property type="evidence" value="ECO:0007669"/>
    <property type="project" value="TreeGrafter"/>
</dbReference>
<dbReference type="GO" id="GO:0004252">
    <property type="term" value="F:serine-type endopeptidase activity"/>
    <property type="evidence" value="ECO:0007669"/>
    <property type="project" value="UniProtKB-UniRule"/>
</dbReference>
<dbReference type="GO" id="GO:0006515">
    <property type="term" value="P:protein quality control for misfolded or incompletely synthesized proteins"/>
    <property type="evidence" value="ECO:0007669"/>
    <property type="project" value="TreeGrafter"/>
</dbReference>
<dbReference type="CDD" id="cd07017">
    <property type="entry name" value="S14_ClpP_2"/>
    <property type="match status" value="1"/>
</dbReference>
<dbReference type="FunFam" id="3.90.226.10:FF:000001">
    <property type="entry name" value="ATP-dependent Clp protease proteolytic subunit"/>
    <property type="match status" value="1"/>
</dbReference>
<dbReference type="Gene3D" id="3.90.226.10">
    <property type="entry name" value="2-enoyl-CoA Hydratase, Chain A, domain 1"/>
    <property type="match status" value="1"/>
</dbReference>
<dbReference type="HAMAP" id="MF_00444">
    <property type="entry name" value="ClpP"/>
    <property type="match status" value="1"/>
</dbReference>
<dbReference type="InterPro" id="IPR001907">
    <property type="entry name" value="ClpP"/>
</dbReference>
<dbReference type="InterPro" id="IPR029045">
    <property type="entry name" value="ClpP/crotonase-like_dom_sf"/>
</dbReference>
<dbReference type="InterPro" id="IPR023562">
    <property type="entry name" value="ClpP/TepA"/>
</dbReference>
<dbReference type="InterPro" id="IPR033135">
    <property type="entry name" value="ClpP_His_AS"/>
</dbReference>
<dbReference type="InterPro" id="IPR018215">
    <property type="entry name" value="ClpP_Ser_AS"/>
</dbReference>
<dbReference type="NCBIfam" id="TIGR00493">
    <property type="entry name" value="clpP"/>
    <property type="match status" value="1"/>
</dbReference>
<dbReference type="NCBIfam" id="NF001368">
    <property type="entry name" value="PRK00277.1"/>
    <property type="match status" value="1"/>
</dbReference>
<dbReference type="NCBIfam" id="NF009205">
    <property type="entry name" value="PRK12553.1"/>
    <property type="match status" value="1"/>
</dbReference>
<dbReference type="PANTHER" id="PTHR10381">
    <property type="entry name" value="ATP-DEPENDENT CLP PROTEASE PROTEOLYTIC SUBUNIT"/>
    <property type="match status" value="1"/>
</dbReference>
<dbReference type="PANTHER" id="PTHR10381:SF70">
    <property type="entry name" value="ATP-DEPENDENT CLP PROTEASE PROTEOLYTIC SUBUNIT"/>
    <property type="match status" value="1"/>
</dbReference>
<dbReference type="Pfam" id="PF00574">
    <property type="entry name" value="CLP_protease"/>
    <property type="match status" value="1"/>
</dbReference>
<dbReference type="PRINTS" id="PR00127">
    <property type="entry name" value="CLPPROTEASEP"/>
</dbReference>
<dbReference type="SUPFAM" id="SSF52096">
    <property type="entry name" value="ClpP/crotonase"/>
    <property type="match status" value="1"/>
</dbReference>
<dbReference type="PROSITE" id="PS00382">
    <property type="entry name" value="CLP_PROTEASE_HIS"/>
    <property type="match status" value="1"/>
</dbReference>
<dbReference type="PROSITE" id="PS00381">
    <property type="entry name" value="CLP_PROTEASE_SER"/>
    <property type="match status" value="1"/>
</dbReference>
<proteinExistence type="inferred from homology"/>
<protein>
    <recommendedName>
        <fullName evidence="1">ATP-dependent Clp protease proteolytic subunit</fullName>
        <ecNumber evidence="1">3.4.21.92</ecNumber>
    </recommendedName>
    <alternativeName>
        <fullName evidence="1">Endopeptidase Clp</fullName>
    </alternativeName>
</protein>
<comment type="function">
    <text evidence="1">Cleaves peptides in various proteins in a process that requires ATP hydrolysis. Has a chymotrypsin-like activity. Plays a major role in the degradation of misfolded proteins.</text>
</comment>
<comment type="catalytic activity">
    <reaction evidence="1">
        <text>Hydrolysis of proteins to small peptides in the presence of ATP and magnesium. alpha-casein is the usual test substrate. In the absence of ATP, only oligopeptides shorter than five residues are hydrolyzed (such as succinyl-Leu-Tyr-|-NHMec, and Leu-Tyr-Leu-|-Tyr-Trp, in which cleavage of the -Tyr-|-Leu- and -Tyr-|-Trp bonds also occurs).</text>
        <dbReference type="EC" id="3.4.21.92"/>
    </reaction>
</comment>
<comment type="subunit">
    <text evidence="1">Fourteen ClpP subunits assemble into 2 heptameric rings which stack back to back to give a disk-like structure with a central cavity, resembling the structure of eukaryotic proteasomes.</text>
</comment>
<comment type="subcellular location">
    <subcellularLocation>
        <location evidence="1">Cytoplasm</location>
    </subcellularLocation>
</comment>
<comment type="similarity">
    <text evidence="1">Belongs to the peptidase S14 family.</text>
</comment>
<name>CLPP_BLOFL</name>
<keyword id="KW-0963">Cytoplasm</keyword>
<keyword id="KW-0378">Hydrolase</keyword>
<keyword id="KW-0645">Protease</keyword>
<keyword id="KW-1185">Reference proteome</keyword>
<keyword id="KW-0720">Serine protease</keyword>
<accession>Q7VRH1</accession>
<sequence length="209" mass="23439">MSYLYDSYFQYIHYNVSMIPTVVKQTSRGDRAYDIFSLLLKERIIFVIGKIENFMANLIVAQIMFLESEDPVKDIHLYINSPGGEVTAGMSIYDIMQFVKPNISTYCIGQAASMGAFLLAAGTTGKRFCLPNSRVMIHQPLGSLHGQATDIAIHATEILKVKENINKLMAKHTGKSIDVIRQDMERDCFLSADESVKYGLVDSVLSKRI</sequence>
<gene>
    <name evidence="1" type="primary">clpP</name>
    <name type="ordered locus">Bfl246</name>
</gene>
<feature type="chain" id="PRO_0000179526" description="ATP-dependent Clp protease proteolytic subunit">
    <location>
        <begin position="1"/>
        <end position="209"/>
    </location>
</feature>
<feature type="active site" description="Nucleophile" evidence="1">
    <location>
        <position position="113"/>
    </location>
</feature>
<feature type="active site" evidence="1">
    <location>
        <position position="138"/>
    </location>
</feature>
<organism>
    <name type="scientific">Blochmanniella floridana</name>
    <dbReference type="NCBI Taxonomy" id="203907"/>
    <lineage>
        <taxon>Bacteria</taxon>
        <taxon>Pseudomonadati</taxon>
        <taxon>Pseudomonadota</taxon>
        <taxon>Gammaproteobacteria</taxon>
        <taxon>Enterobacterales</taxon>
        <taxon>Enterobacteriaceae</taxon>
        <taxon>ant endosymbionts</taxon>
        <taxon>Candidatus Blochmanniella</taxon>
    </lineage>
</organism>